<keyword id="KW-1003">Cell membrane</keyword>
<keyword id="KW-0325">Glycoprotein</keyword>
<keyword id="KW-0472">Membrane</keyword>
<keyword id="KW-1185">Reference proteome</keyword>
<keyword id="KW-0812">Transmembrane</keyword>
<keyword id="KW-1133">Transmembrane helix</keyword>
<keyword id="KW-0813">Transport</keyword>
<gene>
    <name evidence="12" type="primary">FUB11</name>
    <name type="ORF">FFUJ_02118</name>
</gene>
<sequence length="574" mass="63033">MAIDPQPSSPSLSSETIANDTIGNDNNVNEPSVEPKTQEHQHTVPPRLSRIYSQAHHISQSFIDQNYPGEGTTQVPYRINFLPDDSQNAQLPPPMEEVGICGIKQVIRAFGISQEVATLGISLYVLGFTFGPLIWAPLSELYGRKKVFFFTFMVATAFSAGAAGAGSIASLLVLRFLTGSIGSAPLSNAPALIADMFDKSERGLAMCMFSGAPFLGPAIGPIAGGFLGETAGWRWLHGLMAAFTGVTWIACTVFIPETYAPYILRKRAQHMSKLTGKVYISTLDADKPPSSAAHQLKNALTRPWLLLFKEPIVFITSIYISIIYGTMYMCFAAFPIVFQQGRGWSQGIGGLAFTGIVIGVILSIISFAFEDKRYARAAQRRGAPMEPEDRLPPAIMGSLLIPIGLFWFAWTTFASIHWIVPIIGTVFFAWGLVLVFMALLNYLIDSYVIFAASIMAANSALRSLFGAAFPLFTRQMYDGLGVQWASSIPAFLALACVPFPFLFYKYGRQIRMKCEYAAEAANVLQKMRSLHVTVTEDDAMNEAEEMWRARTHNSHTSATHSHGHRRSLSCTRSV</sequence>
<accession>S0DW25</accession>
<organism>
    <name type="scientific">Gibberella fujikuroi (strain CBS 195.34 / IMI 58289 / NRRL A-6831)</name>
    <name type="common">Bakanae and foot rot disease fungus</name>
    <name type="synonym">Fusarium fujikuroi</name>
    <dbReference type="NCBI Taxonomy" id="1279085"/>
    <lineage>
        <taxon>Eukaryota</taxon>
        <taxon>Fungi</taxon>
        <taxon>Dikarya</taxon>
        <taxon>Ascomycota</taxon>
        <taxon>Pezizomycotina</taxon>
        <taxon>Sordariomycetes</taxon>
        <taxon>Hypocreomycetidae</taxon>
        <taxon>Hypocreales</taxon>
        <taxon>Nectriaceae</taxon>
        <taxon>Fusarium</taxon>
        <taxon>Fusarium fujikuroi species complex</taxon>
    </lineage>
</organism>
<reference key="1">
    <citation type="journal article" date="2013" name="PLoS Pathog.">
        <title>Deciphering the cryptic genome: genome-wide analyses of the rice pathogen Fusarium fujikuroi reveal complex regulation of secondary metabolism and novel metabolites.</title>
        <authorList>
            <person name="Wiemann P."/>
            <person name="Sieber C.M.K."/>
            <person name="von Bargen K.W."/>
            <person name="Studt L."/>
            <person name="Niehaus E.-M."/>
            <person name="Espino J.J."/>
            <person name="Huss K."/>
            <person name="Michielse C.B."/>
            <person name="Albermann S."/>
            <person name="Wagner D."/>
            <person name="Bergner S.V."/>
            <person name="Connolly L.R."/>
            <person name="Fischer A."/>
            <person name="Reuter G."/>
            <person name="Kleigrewe K."/>
            <person name="Bald T."/>
            <person name="Wingfield B.D."/>
            <person name="Ophir R."/>
            <person name="Freeman S."/>
            <person name="Hippler M."/>
            <person name="Smith K.M."/>
            <person name="Brown D.W."/>
            <person name="Proctor R.H."/>
            <person name="Muensterkoetter M."/>
            <person name="Freitag M."/>
            <person name="Humpf H.-U."/>
            <person name="Gueldener U."/>
            <person name="Tudzynski B."/>
        </authorList>
    </citation>
    <scope>NUCLEOTIDE SEQUENCE [LARGE SCALE GENOMIC DNA]</scope>
    <source>
        <strain>CBS 195.34 / IMI 58289 / NRRL A-6831</strain>
    </source>
</reference>
<reference key="2">
    <citation type="journal article" date="2006" name="Planta">
        <title>Fusaric acid induces apoptosis in saffron root-tip cells: roles of caspase-like activity, cytochrome c, and H2O2.</title>
        <authorList>
            <person name="Samadi L."/>
            <person name="Shahsavan Behboodi B."/>
        </authorList>
    </citation>
    <scope>BIOTECHNOLOGY</scope>
</reference>
<reference key="3">
    <citation type="journal article" date="2008" name="J. Appl. Microbiol.">
        <title>Bikaverin and fusaric acid from Fusarium oxysporum show antioomycete activity against Phytophthora infestans.</title>
        <authorList>
            <person name="Son S.W."/>
            <person name="Kim H.Y."/>
            <person name="Choi G.J."/>
            <person name="Lim H.K."/>
            <person name="Jang K.S."/>
            <person name="Lee S.O."/>
            <person name="Lee S."/>
            <person name="Sung N.D."/>
            <person name="Kim J.C."/>
        </authorList>
    </citation>
    <scope>BIOTECHNOLOGY</scope>
</reference>
<reference key="4">
    <citation type="journal article" date="2011" name="Arch. Pharm. Res.">
        <title>Antimycobacterial activity of fusaric acid from a mangrove endophyte and its metal complexes.</title>
        <authorList>
            <person name="Pan J.H."/>
            <person name="Chen Y."/>
            <person name="Huang Y.H."/>
            <person name="Tao Y.W."/>
            <person name="Wang J."/>
            <person name="Li Y."/>
            <person name="Peng Y."/>
            <person name="Dong T."/>
            <person name="Lai X.M."/>
            <person name="Lin Y.C."/>
        </authorList>
    </citation>
    <scope>BIOTECHNOLOGY</scope>
</reference>
<reference key="5">
    <citation type="journal article" date="2011" name="Toxicon">
        <title>Phytotoxicity of fusaric acid and analogs to cotton.</title>
        <authorList>
            <person name="Stipanovic R.D."/>
            <person name="Puckhaber L.S."/>
            <person name="Liu J."/>
            <person name="Bell A.A."/>
        </authorList>
    </citation>
    <scope>BIOTECHNOLOGY</scope>
</reference>
<reference key="6">
    <citation type="journal article" date="2012" name="Planta Med.">
        <title>In vitro acanthamoebicidal activity of fusaric acid and dehydrofusaric acid from an endophytic fungus Fusarium sp. Tlau3.</title>
        <authorList>
            <person name="Boonman N."/>
            <person name="Prachya S."/>
            <person name="Boonmee A."/>
            <person name="Kittakoop P."/>
            <person name="Wiyakrutta S."/>
            <person name="Sriubolmas N."/>
            <person name="Warit S."/>
            <person name="Dharmkrong-At Chusattayanond A."/>
        </authorList>
    </citation>
    <scope>BIOTECHNOLOGY</scope>
</reference>
<reference key="7">
    <citation type="journal article" date="2013" name="Planta">
        <title>Fusaric acid induction of programmed cell death modulated through nitric oxide signalling in tobacco suspension cells.</title>
        <authorList>
            <person name="Jiao J."/>
            <person name="Zhou B."/>
            <person name="Zhu X."/>
            <person name="Gao Z."/>
            <person name="Liang Y."/>
        </authorList>
    </citation>
    <scope>BIOTECHNOLOGY</scope>
</reference>
<reference key="8">
    <citation type="journal article" date="2013" name="PLoS ONE">
        <title>Contamination of bananas with beauvericin and fusaric acid produced by Fusarium oxysporum f. sp. cubense.</title>
        <authorList>
            <person name="Li C."/>
            <person name="Zuo C."/>
            <person name="Deng G."/>
            <person name="Kuang R."/>
            <person name="Yang Q."/>
            <person name="Hu C."/>
            <person name="Sheng O."/>
            <person name="Zhang S."/>
            <person name="Ma L."/>
            <person name="Wei Y."/>
            <person name="Yang J."/>
            <person name="Liu S."/>
            <person name="Biswas M.K."/>
            <person name="Viljoen A."/>
            <person name="Yi G."/>
        </authorList>
    </citation>
    <scope>BIOTECHNOLOGY</scope>
</reference>
<reference key="9">
    <citation type="journal article" date="2016" name="Environ. Microbiol.">
        <title>Two separate key enzymes and two pathway-specific transcription factors are involved in fusaric acid biosynthesis in Fusarium fujikuroi.</title>
        <authorList>
            <person name="Studt L."/>
            <person name="Janevska S."/>
            <person name="Niehaus E.M."/>
            <person name="Burkhardt I."/>
            <person name="Arndt B."/>
            <person name="Sieber C.M."/>
            <person name="Humpf H.U."/>
            <person name="Dickschat J.S."/>
            <person name="Tudzynski B."/>
        </authorList>
    </citation>
    <scope>FUNCTION</scope>
    <scope>INDUCTION</scope>
</reference>
<evidence type="ECO:0000255" key="1"/>
<evidence type="ECO:0000255" key="2">
    <source>
        <dbReference type="PROSITE-ProRule" id="PRU00498"/>
    </source>
</evidence>
<evidence type="ECO:0000256" key="3">
    <source>
        <dbReference type="SAM" id="MobiDB-lite"/>
    </source>
</evidence>
<evidence type="ECO:0000269" key="4">
    <source>
    </source>
</evidence>
<evidence type="ECO:0000269" key="5">
    <source>
    </source>
</evidence>
<evidence type="ECO:0000269" key="6">
    <source>
    </source>
</evidence>
<evidence type="ECO:0000269" key="7">
    <source>
    </source>
</evidence>
<evidence type="ECO:0000269" key="8">
    <source>
    </source>
</evidence>
<evidence type="ECO:0000269" key="9">
    <source>
    </source>
</evidence>
<evidence type="ECO:0000269" key="10">
    <source>
    </source>
</evidence>
<evidence type="ECO:0000269" key="11">
    <source>
    </source>
</evidence>
<evidence type="ECO:0000303" key="12">
    <source>
    </source>
</evidence>
<evidence type="ECO:0000305" key="13"/>
<evidence type="ECO:0000305" key="14">
    <source>
    </source>
</evidence>
<name>FUB11_GIBF5</name>
<comment type="function">
    <text evidence="11">Efflux pump involved in export of fusaric acid, a mycotoxin with low to moderate toxicity to animals and humans, but with high phytotoxic properties (PubMed:26662839). Constitutes a self-protecting mechanism of the fungus against critical levels of fusaric acid within the cell (PubMed:26662839).</text>
</comment>
<comment type="subcellular location">
    <subcellularLocation>
        <location evidence="14">Cell membrane</location>
        <topology evidence="1">Multi-pass membrane protein</topology>
    </subcellularLocation>
</comment>
<comment type="induction">
    <text evidence="11">Expression is up-regulated upon exogenous application of fusaric acid (PubMed:26662839).</text>
</comment>
<comment type="biotechnology">
    <text evidence="4 5 6 7 8 9 10">Fusaric acid is phytotoxic to plants such as cotton and banana (PubMed:20955724, PubMed:23922960). It has been shown to induce programmed cell death in plants (PubMed:16868776, PubMed:23838885). In addition to a mild toxicity to animals, fusaric acid exhibits acanthamoebicidal, antioomycete, and antimycobacterial activities (PubMed:17927749, PubMed:21811925, PubMed:22864988).</text>
</comment>
<comment type="similarity">
    <text evidence="13">Belongs to the major facilitator superfamily. DHA1 family. Polyamines/proton antiporter (TC 2.A.1.2.16) subfamily.</text>
</comment>
<feature type="chain" id="PRO_0000437351" description="Efflux pump FUB11">
    <location>
        <begin position="1"/>
        <end position="574"/>
    </location>
</feature>
<feature type="transmembrane region" description="Helical" evidence="1">
    <location>
        <begin position="116"/>
        <end position="136"/>
    </location>
</feature>
<feature type="transmembrane region" description="Helical" evidence="1">
    <location>
        <begin position="148"/>
        <end position="168"/>
    </location>
</feature>
<feature type="transmembrane region" description="Helical" evidence="1">
    <location>
        <begin position="176"/>
        <end position="196"/>
    </location>
</feature>
<feature type="transmembrane region" description="Helical" evidence="1">
    <location>
        <begin position="208"/>
        <end position="228"/>
    </location>
</feature>
<feature type="transmembrane region" description="Helical" evidence="1">
    <location>
        <begin position="235"/>
        <end position="255"/>
    </location>
</feature>
<feature type="transmembrane region" description="Helical" evidence="1">
    <location>
        <begin position="318"/>
        <end position="338"/>
    </location>
</feature>
<feature type="transmembrane region" description="Helical" evidence="1">
    <location>
        <begin position="348"/>
        <end position="368"/>
    </location>
</feature>
<feature type="transmembrane region" description="Helical" evidence="1">
    <location>
        <begin position="394"/>
        <end position="414"/>
    </location>
</feature>
<feature type="transmembrane region" description="Helical" evidence="1">
    <location>
        <begin position="419"/>
        <end position="439"/>
    </location>
</feature>
<feature type="transmembrane region" description="Helical" evidence="1">
    <location>
        <begin position="449"/>
        <end position="469"/>
    </location>
</feature>
<feature type="transmembrane region" description="Helical" evidence="1">
    <location>
        <begin position="484"/>
        <end position="504"/>
    </location>
</feature>
<feature type="region of interest" description="Disordered" evidence="3">
    <location>
        <begin position="1"/>
        <end position="44"/>
    </location>
</feature>
<feature type="region of interest" description="Disordered" evidence="3">
    <location>
        <begin position="552"/>
        <end position="574"/>
    </location>
</feature>
<feature type="compositionally biased region" description="Polar residues" evidence="3">
    <location>
        <begin position="9"/>
        <end position="30"/>
    </location>
</feature>
<feature type="glycosylation site" description="N-linked (GlcNAc...) asparagine" evidence="2">
    <location>
        <position position="19"/>
    </location>
</feature>
<proteinExistence type="evidence at protein level"/>
<dbReference type="EMBL" id="HF679025">
    <property type="protein sequence ID" value="CCT66675.1"/>
    <property type="molecule type" value="Genomic_DNA"/>
</dbReference>
<dbReference type="STRING" id="1279085.S0DW25"/>
<dbReference type="GlyCosmos" id="S0DW25">
    <property type="glycosylation" value="1 site, No reported glycans"/>
</dbReference>
<dbReference type="EnsemblFungi" id="CCT66675">
    <property type="protein sequence ID" value="CCT66675"/>
    <property type="gene ID" value="FFUJ_02118"/>
</dbReference>
<dbReference type="VEuPathDB" id="FungiDB:FFUJ_02118"/>
<dbReference type="HOGENOM" id="CLU_008455_11_6_1"/>
<dbReference type="Proteomes" id="UP000016800">
    <property type="component" value="Chromosome 3"/>
</dbReference>
<dbReference type="GO" id="GO:0005886">
    <property type="term" value="C:plasma membrane"/>
    <property type="evidence" value="ECO:0007669"/>
    <property type="project" value="UniProtKB-SubCell"/>
</dbReference>
<dbReference type="GO" id="GO:0022857">
    <property type="term" value="F:transmembrane transporter activity"/>
    <property type="evidence" value="ECO:0007669"/>
    <property type="project" value="InterPro"/>
</dbReference>
<dbReference type="CDD" id="cd17323">
    <property type="entry name" value="MFS_Tpo1_MDR_like"/>
    <property type="match status" value="1"/>
</dbReference>
<dbReference type="FunFam" id="1.20.1250.20:FF:000011">
    <property type="entry name" value="MFS multidrug transporter, putative"/>
    <property type="match status" value="1"/>
</dbReference>
<dbReference type="Gene3D" id="1.20.1250.20">
    <property type="entry name" value="MFS general substrate transporter like domains"/>
    <property type="match status" value="1"/>
</dbReference>
<dbReference type="InterPro" id="IPR011701">
    <property type="entry name" value="MFS"/>
</dbReference>
<dbReference type="InterPro" id="IPR020846">
    <property type="entry name" value="MFS_dom"/>
</dbReference>
<dbReference type="InterPro" id="IPR036259">
    <property type="entry name" value="MFS_trans_sf"/>
</dbReference>
<dbReference type="PANTHER" id="PTHR23502">
    <property type="entry name" value="MAJOR FACILITATOR SUPERFAMILY"/>
    <property type="match status" value="1"/>
</dbReference>
<dbReference type="PANTHER" id="PTHR23502:SF186">
    <property type="entry name" value="MAJOR FACILITATOR SUPERFAMILY (MFS) PROFILE DOMAIN-CONTAINING PROTEIN"/>
    <property type="match status" value="1"/>
</dbReference>
<dbReference type="Pfam" id="PF07690">
    <property type="entry name" value="MFS_1"/>
    <property type="match status" value="1"/>
</dbReference>
<dbReference type="SUPFAM" id="SSF103473">
    <property type="entry name" value="MFS general substrate transporter"/>
    <property type="match status" value="1"/>
</dbReference>
<dbReference type="PROSITE" id="PS50850">
    <property type="entry name" value="MFS"/>
    <property type="match status" value="1"/>
</dbReference>
<protein>
    <recommendedName>
        <fullName evidence="12">Efflux pump FUB11</fullName>
    </recommendedName>
    <alternativeName>
        <fullName evidence="12">Fusaric acid biosynthesis protein 11</fullName>
    </alternativeName>
</protein>